<dbReference type="EC" id="2.1.3.15" evidence="1"/>
<dbReference type="EMBL" id="CP000115">
    <property type="protein sequence ID" value="ABA03321.1"/>
    <property type="molecule type" value="Genomic_DNA"/>
</dbReference>
<dbReference type="RefSeq" id="WP_011313392.1">
    <property type="nucleotide sequence ID" value="NC_007406.1"/>
</dbReference>
<dbReference type="SMR" id="Q3SWM0"/>
<dbReference type="STRING" id="323098.Nwi_0053"/>
<dbReference type="KEGG" id="nwi:Nwi_0053"/>
<dbReference type="eggNOG" id="COG0777">
    <property type="taxonomic scope" value="Bacteria"/>
</dbReference>
<dbReference type="HOGENOM" id="CLU_015486_1_0_5"/>
<dbReference type="OrthoDB" id="9772975at2"/>
<dbReference type="UniPathway" id="UPA00655">
    <property type="reaction ID" value="UER00711"/>
</dbReference>
<dbReference type="Proteomes" id="UP000002531">
    <property type="component" value="Chromosome"/>
</dbReference>
<dbReference type="GO" id="GO:0009329">
    <property type="term" value="C:acetate CoA-transferase complex"/>
    <property type="evidence" value="ECO:0007669"/>
    <property type="project" value="TreeGrafter"/>
</dbReference>
<dbReference type="GO" id="GO:0003989">
    <property type="term" value="F:acetyl-CoA carboxylase activity"/>
    <property type="evidence" value="ECO:0007669"/>
    <property type="project" value="InterPro"/>
</dbReference>
<dbReference type="GO" id="GO:0005524">
    <property type="term" value="F:ATP binding"/>
    <property type="evidence" value="ECO:0007669"/>
    <property type="project" value="UniProtKB-KW"/>
</dbReference>
<dbReference type="GO" id="GO:0016743">
    <property type="term" value="F:carboxyl- or carbamoyltransferase activity"/>
    <property type="evidence" value="ECO:0007669"/>
    <property type="project" value="UniProtKB-UniRule"/>
</dbReference>
<dbReference type="GO" id="GO:0006633">
    <property type="term" value="P:fatty acid biosynthetic process"/>
    <property type="evidence" value="ECO:0007669"/>
    <property type="project" value="UniProtKB-KW"/>
</dbReference>
<dbReference type="GO" id="GO:2001295">
    <property type="term" value="P:malonyl-CoA biosynthetic process"/>
    <property type="evidence" value="ECO:0007669"/>
    <property type="project" value="UniProtKB-UniRule"/>
</dbReference>
<dbReference type="Gene3D" id="3.90.226.10">
    <property type="entry name" value="2-enoyl-CoA Hydratase, Chain A, domain 1"/>
    <property type="match status" value="1"/>
</dbReference>
<dbReference type="HAMAP" id="MF_01395">
    <property type="entry name" value="AcetylCoA_CT_beta"/>
    <property type="match status" value="1"/>
</dbReference>
<dbReference type="InterPro" id="IPR034733">
    <property type="entry name" value="AcCoA_carboxyl_beta"/>
</dbReference>
<dbReference type="InterPro" id="IPR000438">
    <property type="entry name" value="Acetyl_CoA_COase_Trfase_b_su"/>
</dbReference>
<dbReference type="InterPro" id="IPR029045">
    <property type="entry name" value="ClpP/crotonase-like_dom_sf"/>
</dbReference>
<dbReference type="InterPro" id="IPR011762">
    <property type="entry name" value="COA_CT_N"/>
</dbReference>
<dbReference type="NCBIfam" id="TIGR00515">
    <property type="entry name" value="accD"/>
    <property type="match status" value="1"/>
</dbReference>
<dbReference type="PANTHER" id="PTHR42995">
    <property type="entry name" value="ACETYL-COENZYME A CARBOXYLASE CARBOXYL TRANSFERASE SUBUNIT BETA, CHLOROPLASTIC"/>
    <property type="match status" value="1"/>
</dbReference>
<dbReference type="PANTHER" id="PTHR42995:SF5">
    <property type="entry name" value="ACETYL-COENZYME A CARBOXYLASE CARBOXYL TRANSFERASE SUBUNIT BETA, CHLOROPLASTIC"/>
    <property type="match status" value="1"/>
</dbReference>
<dbReference type="Pfam" id="PF01039">
    <property type="entry name" value="Carboxyl_trans"/>
    <property type="match status" value="1"/>
</dbReference>
<dbReference type="PRINTS" id="PR01070">
    <property type="entry name" value="ACCCTRFRASEB"/>
</dbReference>
<dbReference type="SUPFAM" id="SSF52096">
    <property type="entry name" value="ClpP/crotonase"/>
    <property type="match status" value="1"/>
</dbReference>
<dbReference type="PROSITE" id="PS50980">
    <property type="entry name" value="COA_CT_NTER"/>
    <property type="match status" value="1"/>
</dbReference>
<evidence type="ECO:0000255" key="1">
    <source>
        <dbReference type="HAMAP-Rule" id="MF_01395"/>
    </source>
</evidence>
<evidence type="ECO:0000255" key="2">
    <source>
        <dbReference type="PROSITE-ProRule" id="PRU01136"/>
    </source>
</evidence>
<evidence type="ECO:0000256" key="3">
    <source>
        <dbReference type="SAM" id="MobiDB-lite"/>
    </source>
</evidence>
<feature type="chain" id="PRO_0000389803" description="Acetyl-coenzyme A carboxylase carboxyl transferase subunit beta">
    <location>
        <begin position="1"/>
        <end position="319"/>
    </location>
</feature>
<feature type="domain" description="CoA carboxyltransferase N-terminal" evidence="2">
    <location>
        <begin position="24"/>
        <end position="293"/>
    </location>
</feature>
<feature type="region of interest" description="Disordered" evidence="3">
    <location>
        <begin position="282"/>
        <end position="319"/>
    </location>
</feature>
<accession>Q3SWM0</accession>
<sequence length="319" mass="35183">MNWLTNVVRPKIRNILKRETPDNLWIKCPDTGQLVFYKDVESNQFVIPGSNYHMRMSADARLKSIFDNETWYDVALPEVTADPLKFRDERKYVDRIRDARAKTGLHDSVKVGFGRLEGSAVVVAVQDFDFMGGSLGMAAGEAIVRGLELAVEKRCPFIVFAASGGARMQEGVLSLMQLPRTTVAVQMLREARQPYIVVLTNPTTGGVTASYAMLGDVQIAEPGALIGFAGARVIEQTIREKLPDGFQRAEYLRDHGMIDLVVHRHELRPTLARVCRLLTKAPEMIEQEPEPSAPVPPDEPDEPAATQEAPPAAPAAPPA</sequence>
<gene>
    <name evidence="1" type="primary">accD</name>
    <name type="ordered locus">Nwi_0053</name>
</gene>
<comment type="function">
    <text evidence="1">Component of the acetyl coenzyme A carboxylase (ACC) complex. Biotin carboxylase (BC) catalyzes the carboxylation of biotin on its carrier protein (BCCP) and then the CO(2) group is transferred by the transcarboxylase to acetyl-CoA to form malonyl-CoA.</text>
</comment>
<comment type="catalytic activity">
    <reaction evidence="1">
        <text>N(6)-carboxybiotinyl-L-lysyl-[protein] + acetyl-CoA = N(6)-biotinyl-L-lysyl-[protein] + malonyl-CoA</text>
        <dbReference type="Rhea" id="RHEA:54728"/>
        <dbReference type="Rhea" id="RHEA-COMP:10505"/>
        <dbReference type="Rhea" id="RHEA-COMP:10506"/>
        <dbReference type="ChEBI" id="CHEBI:57288"/>
        <dbReference type="ChEBI" id="CHEBI:57384"/>
        <dbReference type="ChEBI" id="CHEBI:83144"/>
        <dbReference type="ChEBI" id="CHEBI:83145"/>
        <dbReference type="EC" id="2.1.3.15"/>
    </reaction>
</comment>
<comment type="pathway">
    <text evidence="1">Lipid metabolism; malonyl-CoA biosynthesis; malonyl-CoA from acetyl-CoA: step 1/1.</text>
</comment>
<comment type="subunit">
    <text evidence="1">Acetyl-CoA carboxylase is a heterohexamer composed of biotin carboxyl carrier protein (AccB), biotin carboxylase (AccC) and two subunits each of ACCase subunit alpha (AccA) and ACCase subunit beta (AccD).</text>
</comment>
<comment type="subcellular location">
    <subcellularLocation>
        <location evidence="1">Cytoplasm</location>
    </subcellularLocation>
</comment>
<comment type="similarity">
    <text evidence="1">Belongs to the AccD/PCCB family.</text>
</comment>
<organism>
    <name type="scientific">Nitrobacter winogradskyi (strain ATCC 25391 / DSM 10237 / CIP 104748 / NCIMB 11846 / Nb-255)</name>
    <dbReference type="NCBI Taxonomy" id="323098"/>
    <lineage>
        <taxon>Bacteria</taxon>
        <taxon>Pseudomonadati</taxon>
        <taxon>Pseudomonadota</taxon>
        <taxon>Alphaproteobacteria</taxon>
        <taxon>Hyphomicrobiales</taxon>
        <taxon>Nitrobacteraceae</taxon>
        <taxon>Nitrobacter</taxon>
    </lineage>
</organism>
<keyword id="KW-0067">ATP-binding</keyword>
<keyword id="KW-0963">Cytoplasm</keyword>
<keyword id="KW-0275">Fatty acid biosynthesis</keyword>
<keyword id="KW-0276">Fatty acid metabolism</keyword>
<keyword id="KW-0444">Lipid biosynthesis</keyword>
<keyword id="KW-0443">Lipid metabolism</keyword>
<keyword id="KW-0547">Nucleotide-binding</keyword>
<keyword id="KW-1185">Reference proteome</keyword>
<keyword id="KW-0808">Transferase</keyword>
<proteinExistence type="inferred from homology"/>
<reference key="1">
    <citation type="journal article" date="2006" name="Appl. Environ. Microbiol.">
        <title>Genome sequence of the chemolithoautotrophic nitrite-oxidizing bacterium Nitrobacter winogradskyi Nb-255.</title>
        <authorList>
            <person name="Starkenburg S.R."/>
            <person name="Chain P.S.G."/>
            <person name="Sayavedra-Soto L.A."/>
            <person name="Hauser L."/>
            <person name="Land M.L."/>
            <person name="Larimer F.W."/>
            <person name="Malfatti S.A."/>
            <person name="Klotz M.G."/>
            <person name="Bottomley P.J."/>
            <person name="Arp D.J."/>
            <person name="Hickey W.J."/>
        </authorList>
    </citation>
    <scope>NUCLEOTIDE SEQUENCE [LARGE SCALE GENOMIC DNA]</scope>
    <source>
        <strain>ATCC 25391 / DSM 10237 / CIP 104748 / NCIMB 11846 / Nb-255</strain>
    </source>
</reference>
<name>ACCD_NITWN</name>
<protein>
    <recommendedName>
        <fullName evidence="1">Acetyl-coenzyme A carboxylase carboxyl transferase subunit beta</fullName>
        <shortName evidence="1">ACCase subunit beta</shortName>
        <shortName evidence="1">Acetyl-CoA carboxylase carboxyltransferase subunit beta</shortName>
        <ecNumber evidence="1">2.1.3.15</ecNumber>
    </recommendedName>
</protein>